<reference key="1">
    <citation type="journal article" date="2001" name="Proc. Natl. Acad. Sci. U.S.A.">
        <title>Analysis of the chromosome sequence of the legume symbiont Sinorhizobium meliloti strain 1021.</title>
        <authorList>
            <person name="Capela D."/>
            <person name="Barloy-Hubler F."/>
            <person name="Gouzy J."/>
            <person name="Bothe G."/>
            <person name="Ampe F."/>
            <person name="Batut J."/>
            <person name="Boistard P."/>
            <person name="Becker A."/>
            <person name="Boutry M."/>
            <person name="Cadieu E."/>
            <person name="Dreano S."/>
            <person name="Gloux S."/>
            <person name="Godrie T."/>
            <person name="Goffeau A."/>
            <person name="Kahn D."/>
            <person name="Kiss E."/>
            <person name="Lelaure V."/>
            <person name="Masuy D."/>
            <person name="Pohl T."/>
            <person name="Portetelle D."/>
            <person name="Puehler A."/>
            <person name="Purnelle B."/>
            <person name="Ramsperger U."/>
            <person name="Renard C."/>
            <person name="Thebault P."/>
            <person name="Vandenbol M."/>
            <person name="Weidner S."/>
            <person name="Galibert F."/>
        </authorList>
    </citation>
    <scope>NUCLEOTIDE SEQUENCE [LARGE SCALE GENOMIC DNA]</scope>
    <source>
        <strain>1021</strain>
    </source>
</reference>
<reference key="2">
    <citation type="journal article" date="2001" name="Science">
        <title>The composite genome of the legume symbiont Sinorhizobium meliloti.</title>
        <authorList>
            <person name="Galibert F."/>
            <person name="Finan T.M."/>
            <person name="Long S.R."/>
            <person name="Puehler A."/>
            <person name="Abola P."/>
            <person name="Ampe F."/>
            <person name="Barloy-Hubler F."/>
            <person name="Barnett M.J."/>
            <person name="Becker A."/>
            <person name="Boistard P."/>
            <person name="Bothe G."/>
            <person name="Boutry M."/>
            <person name="Bowser L."/>
            <person name="Buhrmester J."/>
            <person name="Cadieu E."/>
            <person name="Capela D."/>
            <person name="Chain P."/>
            <person name="Cowie A."/>
            <person name="Davis R.W."/>
            <person name="Dreano S."/>
            <person name="Federspiel N.A."/>
            <person name="Fisher R.F."/>
            <person name="Gloux S."/>
            <person name="Godrie T."/>
            <person name="Goffeau A."/>
            <person name="Golding B."/>
            <person name="Gouzy J."/>
            <person name="Gurjal M."/>
            <person name="Hernandez-Lucas I."/>
            <person name="Hong A."/>
            <person name="Huizar L."/>
            <person name="Hyman R.W."/>
            <person name="Jones T."/>
            <person name="Kahn D."/>
            <person name="Kahn M.L."/>
            <person name="Kalman S."/>
            <person name="Keating D.H."/>
            <person name="Kiss E."/>
            <person name="Komp C."/>
            <person name="Lelaure V."/>
            <person name="Masuy D."/>
            <person name="Palm C."/>
            <person name="Peck M.C."/>
            <person name="Pohl T.M."/>
            <person name="Portetelle D."/>
            <person name="Purnelle B."/>
            <person name="Ramsperger U."/>
            <person name="Surzycki R."/>
            <person name="Thebault P."/>
            <person name="Vandenbol M."/>
            <person name="Vorhoelter F.J."/>
            <person name="Weidner S."/>
            <person name="Wells D.H."/>
            <person name="Wong K."/>
            <person name="Yeh K.-C."/>
            <person name="Batut J."/>
        </authorList>
    </citation>
    <scope>NUCLEOTIDE SEQUENCE [LARGE SCALE GENOMIC DNA]</scope>
    <source>
        <strain>1021</strain>
    </source>
</reference>
<reference key="3">
    <citation type="journal article" date="1991" name="Mol. Gen. Genet.">
        <title>Characterization of recA genes and recA mutants of Rhizobium meliloti and Rhizobium leguminosarum biovar viciae.</title>
        <authorList>
            <person name="Selbitschka W."/>
            <person name="Arnold W."/>
            <person name="Priefer U.B."/>
            <person name="Rottschafer T."/>
            <person name="Schmidt M."/>
            <person name="Simon R."/>
            <person name="Puehler A."/>
        </authorList>
    </citation>
    <scope>NUCLEOTIDE SEQUENCE [GENOMIC DNA] OF 1-201</scope>
    <source>
        <strain>RCR2011 / SU47</strain>
    </source>
</reference>
<accession>P27866</accession>
<sequence>MSGVNEIRSMFLDYFRKNGHEIVSSSPLVPRNDPTLMFTNAGMVQFKNVFTGLEQRPYSTAATAQKCVRAGGKHNDLDNVGYTARHHTFFEMLGNFSFGDYFKERAIELAWNLITKEYGLDAKRLLVTVYHTDDEAFGLWKKIAGLSDDRIIRIATSDNFWAMGDTGPCGPCSEIFYDHGDHIWGGPPGSAEEDGDRFIEIWNLVFMQYEQITKEERVDLPRPSIDTGMGLERVAAVLQGQHDNYDIDLFRALIAASEEATGVKAEGDRRASHRVIADHLRSSAFLIADGVLPSNEGRGYVLRRIMRRAMRHAQLLGARDPLMWKLLPALVGQMGRAYPELVRAEALISETLKLEETRFRKTLERGLNLLAEASADLSEGDQFNGETAFKLYDTYGFPLDLTQDALRAKGIGVDTDAFTAAMQRQKAEARANWAGSGEAATETIWFELRDKHGATDFLGYDTESAEGVILAIVKDGAVVESAAKGENVQLVLNQTPFYGESGGQVGDTGVITTETGKLTVTDTQKRGEGLFVHYCTVEEGSVKTGEAAALTVDHARRARLRANHSATHLLHEALREVLGTHVAQKGSLVAPERLRFDVSHPKPMTAEELKIVEEMANEIIVQNTPVVTRLMSVDDAIAEGAMALFGEKYGDEVRVVSMGQGLRGSKAGKPYSVELCGGTHVSATGDIGLVRVVSESAVGAGVRRVEALTGEAARAYLGEQDERVKTLAAALKVQPADVLGRVEALLDERRKLERELTEAKKKLALAGDGQNGSGDAARDIGGVRFLGRVVSGVEPKDLKSLADDGKKSLGSGVVAFVGVSGDGKASAVVAVTDDLTSKVSAVDLVRVASAALGGKGGGGRPDMAQAGGPDGGRAAEAIEAVAGALAG</sequence>
<evidence type="ECO:0000255" key="1">
    <source>
        <dbReference type="HAMAP-Rule" id="MF_00036"/>
    </source>
</evidence>
<evidence type="ECO:0000305" key="2"/>
<proteinExistence type="inferred from homology"/>
<dbReference type="EC" id="6.1.1.7" evidence="1"/>
<dbReference type="EMBL" id="AL591688">
    <property type="protein sequence ID" value="CAC46377.1"/>
    <property type="molecule type" value="Genomic_DNA"/>
</dbReference>
<dbReference type="EMBL" id="X59957">
    <property type="protein sequence ID" value="CAA42581.1"/>
    <property type="molecule type" value="Genomic_DNA"/>
</dbReference>
<dbReference type="PIR" id="S16899">
    <property type="entry name" value="S16899"/>
</dbReference>
<dbReference type="RefSeq" id="NP_385904.1">
    <property type="nucleotide sequence ID" value="NC_003047.1"/>
</dbReference>
<dbReference type="RefSeq" id="WP_010969477.1">
    <property type="nucleotide sequence ID" value="NC_003047.1"/>
</dbReference>
<dbReference type="SMR" id="P27866"/>
<dbReference type="EnsemblBacteria" id="CAC46377">
    <property type="protein sequence ID" value="CAC46377"/>
    <property type="gene ID" value="SMc00475"/>
</dbReference>
<dbReference type="KEGG" id="sme:SMc00475"/>
<dbReference type="PATRIC" id="fig|266834.11.peg.3238"/>
<dbReference type="eggNOG" id="COG0013">
    <property type="taxonomic scope" value="Bacteria"/>
</dbReference>
<dbReference type="HOGENOM" id="CLU_004485_1_1_5"/>
<dbReference type="OrthoDB" id="9803884at2"/>
<dbReference type="Proteomes" id="UP000001976">
    <property type="component" value="Chromosome"/>
</dbReference>
<dbReference type="GO" id="GO:0005829">
    <property type="term" value="C:cytosol"/>
    <property type="evidence" value="ECO:0007669"/>
    <property type="project" value="TreeGrafter"/>
</dbReference>
<dbReference type="GO" id="GO:0004813">
    <property type="term" value="F:alanine-tRNA ligase activity"/>
    <property type="evidence" value="ECO:0007669"/>
    <property type="project" value="UniProtKB-UniRule"/>
</dbReference>
<dbReference type="GO" id="GO:0002161">
    <property type="term" value="F:aminoacyl-tRNA deacylase activity"/>
    <property type="evidence" value="ECO:0007669"/>
    <property type="project" value="TreeGrafter"/>
</dbReference>
<dbReference type="GO" id="GO:0005524">
    <property type="term" value="F:ATP binding"/>
    <property type="evidence" value="ECO:0007669"/>
    <property type="project" value="UniProtKB-UniRule"/>
</dbReference>
<dbReference type="GO" id="GO:0000049">
    <property type="term" value="F:tRNA binding"/>
    <property type="evidence" value="ECO:0007669"/>
    <property type="project" value="UniProtKB-KW"/>
</dbReference>
<dbReference type="GO" id="GO:0008270">
    <property type="term" value="F:zinc ion binding"/>
    <property type="evidence" value="ECO:0007669"/>
    <property type="project" value="UniProtKB-UniRule"/>
</dbReference>
<dbReference type="GO" id="GO:0006419">
    <property type="term" value="P:alanyl-tRNA aminoacylation"/>
    <property type="evidence" value="ECO:0007669"/>
    <property type="project" value="UniProtKB-UniRule"/>
</dbReference>
<dbReference type="GO" id="GO:0045892">
    <property type="term" value="P:negative regulation of DNA-templated transcription"/>
    <property type="evidence" value="ECO:0007669"/>
    <property type="project" value="TreeGrafter"/>
</dbReference>
<dbReference type="CDD" id="cd00673">
    <property type="entry name" value="AlaRS_core"/>
    <property type="match status" value="1"/>
</dbReference>
<dbReference type="FunFam" id="2.40.30.130:FF:000001">
    <property type="entry name" value="Alanine--tRNA ligase"/>
    <property type="match status" value="1"/>
</dbReference>
<dbReference type="FunFam" id="3.10.310.40:FF:000001">
    <property type="entry name" value="Alanine--tRNA ligase"/>
    <property type="match status" value="1"/>
</dbReference>
<dbReference type="FunFam" id="3.30.54.20:FF:000001">
    <property type="entry name" value="Alanine--tRNA ligase"/>
    <property type="match status" value="1"/>
</dbReference>
<dbReference type="FunFam" id="3.30.930.10:FF:000004">
    <property type="entry name" value="Alanine--tRNA ligase"/>
    <property type="match status" value="1"/>
</dbReference>
<dbReference type="FunFam" id="3.30.980.10:FF:000004">
    <property type="entry name" value="Alanine--tRNA ligase, cytoplasmic"/>
    <property type="match status" value="1"/>
</dbReference>
<dbReference type="Gene3D" id="2.40.30.130">
    <property type="match status" value="1"/>
</dbReference>
<dbReference type="Gene3D" id="3.10.310.40">
    <property type="match status" value="1"/>
</dbReference>
<dbReference type="Gene3D" id="3.30.54.20">
    <property type="match status" value="1"/>
</dbReference>
<dbReference type="Gene3D" id="6.10.250.550">
    <property type="match status" value="1"/>
</dbReference>
<dbReference type="Gene3D" id="3.30.930.10">
    <property type="entry name" value="Bira Bifunctional Protein, Domain 2"/>
    <property type="match status" value="1"/>
</dbReference>
<dbReference type="Gene3D" id="3.30.980.10">
    <property type="entry name" value="Threonyl-trna Synthetase, Chain A, domain 2"/>
    <property type="match status" value="1"/>
</dbReference>
<dbReference type="HAMAP" id="MF_00036_B">
    <property type="entry name" value="Ala_tRNA_synth_B"/>
    <property type="match status" value="1"/>
</dbReference>
<dbReference type="InterPro" id="IPR045864">
    <property type="entry name" value="aa-tRNA-synth_II/BPL/LPL"/>
</dbReference>
<dbReference type="InterPro" id="IPR002318">
    <property type="entry name" value="Ala-tRNA-lgiase_IIc"/>
</dbReference>
<dbReference type="InterPro" id="IPR018162">
    <property type="entry name" value="Ala-tRNA-ligase_IIc_anticod-bd"/>
</dbReference>
<dbReference type="InterPro" id="IPR018165">
    <property type="entry name" value="Ala-tRNA-synth_IIc_core"/>
</dbReference>
<dbReference type="InterPro" id="IPR018164">
    <property type="entry name" value="Ala-tRNA-synth_IIc_N"/>
</dbReference>
<dbReference type="InterPro" id="IPR050058">
    <property type="entry name" value="Ala-tRNA_ligase"/>
</dbReference>
<dbReference type="InterPro" id="IPR023033">
    <property type="entry name" value="Ala_tRNA_ligase_euk/bac"/>
</dbReference>
<dbReference type="InterPro" id="IPR003156">
    <property type="entry name" value="DHHA1_dom"/>
</dbReference>
<dbReference type="InterPro" id="IPR018163">
    <property type="entry name" value="Thr/Ala-tRNA-synth_IIc_edit"/>
</dbReference>
<dbReference type="InterPro" id="IPR009000">
    <property type="entry name" value="Transl_B-barrel_sf"/>
</dbReference>
<dbReference type="InterPro" id="IPR012947">
    <property type="entry name" value="tRNA_SAD"/>
</dbReference>
<dbReference type="NCBIfam" id="TIGR00344">
    <property type="entry name" value="alaS"/>
    <property type="match status" value="1"/>
</dbReference>
<dbReference type="PANTHER" id="PTHR11777:SF9">
    <property type="entry name" value="ALANINE--TRNA LIGASE, CYTOPLASMIC"/>
    <property type="match status" value="1"/>
</dbReference>
<dbReference type="PANTHER" id="PTHR11777">
    <property type="entry name" value="ALANYL-TRNA SYNTHETASE"/>
    <property type="match status" value="1"/>
</dbReference>
<dbReference type="Pfam" id="PF02272">
    <property type="entry name" value="DHHA1"/>
    <property type="match status" value="1"/>
</dbReference>
<dbReference type="Pfam" id="PF01411">
    <property type="entry name" value="tRNA-synt_2c"/>
    <property type="match status" value="1"/>
</dbReference>
<dbReference type="Pfam" id="PF07973">
    <property type="entry name" value="tRNA_SAD"/>
    <property type="match status" value="1"/>
</dbReference>
<dbReference type="PRINTS" id="PR00980">
    <property type="entry name" value="TRNASYNTHALA"/>
</dbReference>
<dbReference type="SMART" id="SM00863">
    <property type="entry name" value="tRNA_SAD"/>
    <property type="match status" value="1"/>
</dbReference>
<dbReference type="SUPFAM" id="SSF55681">
    <property type="entry name" value="Class II aaRS and biotin synthetases"/>
    <property type="match status" value="1"/>
</dbReference>
<dbReference type="SUPFAM" id="SSF101353">
    <property type="entry name" value="Putative anticodon-binding domain of alanyl-tRNA synthetase (AlaRS)"/>
    <property type="match status" value="1"/>
</dbReference>
<dbReference type="SUPFAM" id="SSF55186">
    <property type="entry name" value="ThrRS/AlaRS common domain"/>
    <property type="match status" value="1"/>
</dbReference>
<dbReference type="SUPFAM" id="SSF50447">
    <property type="entry name" value="Translation proteins"/>
    <property type="match status" value="1"/>
</dbReference>
<dbReference type="PROSITE" id="PS50860">
    <property type="entry name" value="AA_TRNA_LIGASE_II_ALA"/>
    <property type="match status" value="1"/>
</dbReference>
<gene>
    <name evidence="1" type="primary">alaS</name>
    <name type="ordered locus">R01798</name>
    <name type="ORF">SMc00475</name>
</gene>
<protein>
    <recommendedName>
        <fullName evidence="1">Alanine--tRNA ligase</fullName>
        <ecNumber evidence="1">6.1.1.7</ecNumber>
    </recommendedName>
    <alternativeName>
        <fullName evidence="1">Alanyl-tRNA synthetase</fullName>
        <shortName evidence="1">AlaRS</shortName>
    </alternativeName>
</protein>
<comment type="function">
    <text evidence="1">Catalyzes the attachment of alanine to tRNA(Ala) in a two-step reaction: alanine is first activated by ATP to form Ala-AMP and then transferred to the acceptor end of tRNA(Ala). Also edits incorrectly charged Ser-tRNA(Ala) and Gly-tRNA(Ala) via its editing domain.</text>
</comment>
<comment type="catalytic activity">
    <reaction evidence="1">
        <text>tRNA(Ala) + L-alanine + ATP = L-alanyl-tRNA(Ala) + AMP + diphosphate</text>
        <dbReference type="Rhea" id="RHEA:12540"/>
        <dbReference type="Rhea" id="RHEA-COMP:9657"/>
        <dbReference type="Rhea" id="RHEA-COMP:9923"/>
        <dbReference type="ChEBI" id="CHEBI:30616"/>
        <dbReference type="ChEBI" id="CHEBI:33019"/>
        <dbReference type="ChEBI" id="CHEBI:57972"/>
        <dbReference type="ChEBI" id="CHEBI:78442"/>
        <dbReference type="ChEBI" id="CHEBI:78497"/>
        <dbReference type="ChEBI" id="CHEBI:456215"/>
        <dbReference type="EC" id="6.1.1.7"/>
    </reaction>
</comment>
<comment type="cofactor">
    <cofactor evidence="1">
        <name>Zn(2+)</name>
        <dbReference type="ChEBI" id="CHEBI:29105"/>
    </cofactor>
    <text evidence="1">Binds 1 zinc ion per subunit.</text>
</comment>
<comment type="subcellular location">
    <subcellularLocation>
        <location evidence="1">Cytoplasm</location>
    </subcellularLocation>
</comment>
<comment type="domain">
    <text evidence="1">Consists of three domains; the N-terminal catalytic domain, the editing domain and the C-terminal C-Ala domain. The editing domain removes incorrectly charged amino acids, while the C-Ala domain, along with tRNA(Ala), serves as a bridge to cooperatively bring together the editing and aminoacylation centers thus stimulating deacylation of misacylated tRNAs.</text>
</comment>
<comment type="similarity">
    <text evidence="1">Belongs to the class-II aminoacyl-tRNA synthetase family.</text>
</comment>
<keyword id="KW-0030">Aminoacyl-tRNA synthetase</keyword>
<keyword id="KW-0067">ATP-binding</keyword>
<keyword id="KW-0963">Cytoplasm</keyword>
<keyword id="KW-0436">Ligase</keyword>
<keyword id="KW-0479">Metal-binding</keyword>
<keyword id="KW-0547">Nucleotide-binding</keyword>
<keyword id="KW-0648">Protein biosynthesis</keyword>
<keyword id="KW-1185">Reference proteome</keyword>
<keyword id="KW-0694">RNA-binding</keyword>
<keyword id="KW-0820">tRNA-binding</keyword>
<keyword id="KW-0862">Zinc</keyword>
<organism>
    <name type="scientific">Rhizobium meliloti (strain 1021)</name>
    <name type="common">Ensifer meliloti</name>
    <name type="synonym">Sinorhizobium meliloti</name>
    <dbReference type="NCBI Taxonomy" id="266834"/>
    <lineage>
        <taxon>Bacteria</taxon>
        <taxon>Pseudomonadati</taxon>
        <taxon>Pseudomonadota</taxon>
        <taxon>Alphaproteobacteria</taxon>
        <taxon>Hyphomicrobiales</taxon>
        <taxon>Rhizobiaceae</taxon>
        <taxon>Sinorhizobium/Ensifer group</taxon>
        <taxon>Sinorhizobium</taxon>
    </lineage>
</organism>
<name>SYA_RHIME</name>
<feature type="chain" id="PRO_0000075187" description="Alanine--tRNA ligase">
    <location>
        <begin position="1"/>
        <end position="887"/>
    </location>
</feature>
<feature type="binding site" evidence="1">
    <location>
        <position position="564"/>
    </location>
    <ligand>
        <name>Zn(2+)</name>
        <dbReference type="ChEBI" id="CHEBI:29105"/>
    </ligand>
</feature>
<feature type="binding site" evidence="1">
    <location>
        <position position="568"/>
    </location>
    <ligand>
        <name>Zn(2+)</name>
        <dbReference type="ChEBI" id="CHEBI:29105"/>
    </ligand>
</feature>
<feature type="binding site" evidence="1">
    <location>
        <position position="676"/>
    </location>
    <ligand>
        <name>Zn(2+)</name>
        <dbReference type="ChEBI" id="CHEBI:29105"/>
    </ligand>
</feature>
<feature type="binding site" evidence="1">
    <location>
        <position position="680"/>
    </location>
    <ligand>
        <name>Zn(2+)</name>
        <dbReference type="ChEBI" id="CHEBI:29105"/>
    </ligand>
</feature>
<feature type="sequence conflict" description="In Ref. 3; CAA42581." evidence="2" ref="3">
    <original>EA</original>
    <variation>DT</variation>
    <location>
        <begin position="135"/>
        <end position="136"/>
    </location>
</feature>
<feature type="sequence conflict" description="In Ref. 3; CAA42581." evidence="2" ref="3">
    <original>R</original>
    <variation>H</variation>
    <location>
        <position position="150"/>
    </location>
</feature>